<dbReference type="EMBL" id="Z48585">
    <property type="protein sequence ID" value="CAA88483.1"/>
    <property type="molecule type" value="Genomic_DNA"/>
</dbReference>
<dbReference type="PIR" id="T27964">
    <property type="entry name" value="T27964"/>
</dbReference>
<dbReference type="RefSeq" id="NP_496248.1">
    <property type="nucleotide sequence ID" value="NM_063847.3"/>
</dbReference>
<dbReference type="SMR" id="Q09664"/>
<dbReference type="FunCoup" id="Q09664">
    <property type="interactions" value="308"/>
</dbReference>
<dbReference type="STRING" id="6239.ZK673.5.1"/>
<dbReference type="PaxDb" id="6239-ZK673.5"/>
<dbReference type="EnsemblMetazoa" id="ZK673.5.1">
    <property type="protein sequence ID" value="ZK673.5.1"/>
    <property type="gene ID" value="WBGene00014061"/>
</dbReference>
<dbReference type="GeneID" id="174610"/>
<dbReference type="KEGG" id="cel:CELE_ZK673.5"/>
<dbReference type="UCSC" id="ZK673.5">
    <property type="organism name" value="c. elegans"/>
</dbReference>
<dbReference type="AGR" id="WB:WBGene00014061"/>
<dbReference type="CTD" id="174610"/>
<dbReference type="WormBase" id="ZK673.5">
    <property type="protein sequence ID" value="CE02394"/>
    <property type="gene ID" value="WBGene00014061"/>
</dbReference>
<dbReference type="eggNOG" id="ENOG502T9EQ">
    <property type="taxonomic scope" value="Eukaryota"/>
</dbReference>
<dbReference type="GeneTree" id="ENSGT00970000196838"/>
<dbReference type="HOGENOM" id="CLU_1798183_0_0_1"/>
<dbReference type="InParanoid" id="Q09664"/>
<dbReference type="OMA" id="QYHYESH"/>
<dbReference type="OrthoDB" id="5843554at2759"/>
<dbReference type="PhylomeDB" id="Q09664"/>
<dbReference type="PRO" id="PR:Q09664"/>
<dbReference type="Proteomes" id="UP000001940">
    <property type="component" value="Chromosome II"/>
</dbReference>
<dbReference type="Bgee" id="WBGene00014061">
    <property type="expression patterns" value="Expressed in embryo and 3 other cell types or tissues"/>
</dbReference>
<feature type="chain" id="PRO_0000065539" description="Uncharacterized protein ZK673.5">
    <location>
        <begin position="1"/>
        <end position="146"/>
    </location>
</feature>
<feature type="region of interest" description="Disordered" evidence="1">
    <location>
        <begin position="67"/>
        <end position="93"/>
    </location>
</feature>
<feature type="compositionally biased region" description="Low complexity" evidence="1">
    <location>
        <begin position="77"/>
        <end position="92"/>
    </location>
</feature>
<accession>Q09664</accession>
<reference key="1">
    <citation type="journal article" date="1998" name="Science">
        <title>Genome sequence of the nematode C. elegans: a platform for investigating biology.</title>
        <authorList>
            <consortium name="The C. elegans sequencing consortium"/>
        </authorList>
    </citation>
    <scope>NUCLEOTIDE SEQUENCE [LARGE SCALE GENOMIC DNA]</scope>
    <source>
        <strain>Bristol N2</strain>
    </source>
</reference>
<proteinExistence type="predicted"/>
<organism>
    <name type="scientific">Caenorhabditis elegans</name>
    <dbReference type="NCBI Taxonomy" id="6239"/>
    <lineage>
        <taxon>Eukaryota</taxon>
        <taxon>Metazoa</taxon>
        <taxon>Ecdysozoa</taxon>
        <taxon>Nematoda</taxon>
        <taxon>Chromadorea</taxon>
        <taxon>Rhabditida</taxon>
        <taxon>Rhabditina</taxon>
        <taxon>Rhabditomorpha</taxon>
        <taxon>Rhabditoidea</taxon>
        <taxon>Rhabditidae</taxon>
        <taxon>Peloderinae</taxon>
        <taxon>Caenorhabditis</taxon>
    </lineage>
</organism>
<gene>
    <name type="ORF">ZK673.5</name>
</gene>
<sequence length="146" mass="16646">MEYSYIPSAALYNNADIFQFFPRNKRLNSHQKSRLDEHARKMAAFMMERQEEYRYYENLANQEQFSDDNGMESGFCSGATSTGQSASTSPAPVQLIPNPFFDPEYVAAKTQSPVKLVTNPFFNPELVEEIKKKSQKRNEKSAPVSA</sequence>
<evidence type="ECO:0000256" key="1">
    <source>
        <dbReference type="SAM" id="MobiDB-lite"/>
    </source>
</evidence>
<keyword id="KW-1185">Reference proteome</keyword>
<name>YS55_CAEEL</name>
<protein>
    <recommendedName>
        <fullName>Uncharacterized protein ZK673.5</fullName>
    </recommendedName>
</protein>